<comment type="catalytic activity">
    <reaction evidence="1">
        <text>5-amino-1-(5-phospho-D-ribosyl)imidazole-4-carboxylate + L-aspartate + ATP = (2S)-2-[5-amino-1-(5-phospho-beta-D-ribosyl)imidazole-4-carboxamido]succinate + ADP + phosphate + 2 H(+)</text>
        <dbReference type="Rhea" id="RHEA:22628"/>
        <dbReference type="ChEBI" id="CHEBI:15378"/>
        <dbReference type="ChEBI" id="CHEBI:29991"/>
        <dbReference type="ChEBI" id="CHEBI:30616"/>
        <dbReference type="ChEBI" id="CHEBI:43474"/>
        <dbReference type="ChEBI" id="CHEBI:58443"/>
        <dbReference type="ChEBI" id="CHEBI:77657"/>
        <dbReference type="ChEBI" id="CHEBI:456216"/>
        <dbReference type="EC" id="6.3.2.6"/>
    </reaction>
</comment>
<comment type="pathway">
    <text evidence="1">Purine metabolism; IMP biosynthesis via de novo pathway; 5-amino-1-(5-phospho-D-ribosyl)imidazole-4-carboxamide from 5-amino-1-(5-phospho-D-ribosyl)imidazole-4-carboxylate: step 1/2.</text>
</comment>
<comment type="similarity">
    <text evidence="1">Belongs to the SAICAR synthetase family.</text>
</comment>
<name>PUR7_STACT</name>
<dbReference type="EC" id="6.3.2.6" evidence="1"/>
<dbReference type="EMBL" id="AM295250">
    <property type="protein sequence ID" value="CAL27599.1"/>
    <property type="molecule type" value="Genomic_DNA"/>
</dbReference>
<dbReference type="RefSeq" id="WP_015899942.1">
    <property type="nucleotide sequence ID" value="NC_012121.1"/>
</dbReference>
<dbReference type="SMR" id="B9DQ35"/>
<dbReference type="GeneID" id="93795626"/>
<dbReference type="KEGG" id="sca:SCA_0688"/>
<dbReference type="eggNOG" id="COG0152">
    <property type="taxonomic scope" value="Bacteria"/>
</dbReference>
<dbReference type="HOGENOM" id="CLU_061495_2_0_9"/>
<dbReference type="OrthoDB" id="9801549at2"/>
<dbReference type="BioCyc" id="SCAR396513:SCA_RS03495-MONOMER"/>
<dbReference type="UniPathway" id="UPA00074">
    <property type="reaction ID" value="UER00131"/>
</dbReference>
<dbReference type="Proteomes" id="UP000000444">
    <property type="component" value="Chromosome"/>
</dbReference>
<dbReference type="GO" id="GO:0005524">
    <property type="term" value="F:ATP binding"/>
    <property type="evidence" value="ECO:0007669"/>
    <property type="project" value="UniProtKB-KW"/>
</dbReference>
<dbReference type="GO" id="GO:0004639">
    <property type="term" value="F:phosphoribosylaminoimidazolesuccinocarboxamide synthase activity"/>
    <property type="evidence" value="ECO:0007669"/>
    <property type="project" value="UniProtKB-UniRule"/>
</dbReference>
<dbReference type="GO" id="GO:0006189">
    <property type="term" value="P:'de novo' IMP biosynthetic process"/>
    <property type="evidence" value="ECO:0007669"/>
    <property type="project" value="UniProtKB-UniRule"/>
</dbReference>
<dbReference type="GO" id="GO:0009236">
    <property type="term" value="P:cobalamin biosynthetic process"/>
    <property type="evidence" value="ECO:0007669"/>
    <property type="project" value="InterPro"/>
</dbReference>
<dbReference type="CDD" id="cd01415">
    <property type="entry name" value="SAICAR_synt_PurC"/>
    <property type="match status" value="1"/>
</dbReference>
<dbReference type="FunFam" id="3.30.200.20:FF:000189">
    <property type="entry name" value="Phosphoribosylaminoimidazole-succinocarboxamide synthase"/>
    <property type="match status" value="1"/>
</dbReference>
<dbReference type="FunFam" id="3.30.470.20:FF:000006">
    <property type="entry name" value="Phosphoribosylaminoimidazole-succinocarboxamide synthase"/>
    <property type="match status" value="1"/>
</dbReference>
<dbReference type="Gene3D" id="3.30.470.20">
    <property type="entry name" value="ATP-grasp fold, B domain"/>
    <property type="match status" value="1"/>
</dbReference>
<dbReference type="Gene3D" id="3.30.200.20">
    <property type="entry name" value="Phosphorylase Kinase, domain 1"/>
    <property type="match status" value="1"/>
</dbReference>
<dbReference type="HAMAP" id="MF_00137">
    <property type="entry name" value="SAICAR_synth"/>
    <property type="match status" value="1"/>
</dbReference>
<dbReference type="InterPro" id="IPR028923">
    <property type="entry name" value="SAICAR_synt/ADE2_N"/>
</dbReference>
<dbReference type="InterPro" id="IPR033934">
    <property type="entry name" value="SAICAR_synt_PurC"/>
</dbReference>
<dbReference type="InterPro" id="IPR001636">
    <property type="entry name" value="SAICAR_synth"/>
</dbReference>
<dbReference type="InterPro" id="IPR050089">
    <property type="entry name" value="SAICAR_synthetase"/>
</dbReference>
<dbReference type="InterPro" id="IPR018236">
    <property type="entry name" value="SAICAR_synthetase_CS"/>
</dbReference>
<dbReference type="NCBIfam" id="TIGR00081">
    <property type="entry name" value="purC"/>
    <property type="match status" value="1"/>
</dbReference>
<dbReference type="PANTHER" id="PTHR43599">
    <property type="entry name" value="MULTIFUNCTIONAL PROTEIN ADE2"/>
    <property type="match status" value="1"/>
</dbReference>
<dbReference type="PANTHER" id="PTHR43599:SF3">
    <property type="entry name" value="SI:DKEY-6E2.2"/>
    <property type="match status" value="1"/>
</dbReference>
<dbReference type="Pfam" id="PF01259">
    <property type="entry name" value="SAICAR_synt"/>
    <property type="match status" value="1"/>
</dbReference>
<dbReference type="SUPFAM" id="SSF56104">
    <property type="entry name" value="SAICAR synthase-like"/>
    <property type="match status" value="1"/>
</dbReference>
<dbReference type="PROSITE" id="PS01057">
    <property type="entry name" value="SAICAR_SYNTHETASE_1"/>
    <property type="match status" value="1"/>
</dbReference>
<dbReference type="PROSITE" id="PS01058">
    <property type="entry name" value="SAICAR_SYNTHETASE_2"/>
    <property type="match status" value="1"/>
</dbReference>
<organism>
    <name type="scientific">Staphylococcus carnosus (strain TM300)</name>
    <dbReference type="NCBI Taxonomy" id="396513"/>
    <lineage>
        <taxon>Bacteria</taxon>
        <taxon>Bacillati</taxon>
        <taxon>Bacillota</taxon>
        <taxon>Bacilli</taxon>
        <taxon>Bacillales</taxon>
        <taxon>Staphylococcaceae</taxon>
        <taxon>Staphylococcus</taxon>
    </lineage>
</organism>
<sequence>MSLLYEGKAKRIFSTDEDGVLRVEYKDEVTAGNGAKKDHIDGKGRLNNQITSIIFEHLKKHGIKSHFIEQTSETEQLVRSVEIIPLEVVVRNIAAGSITKRLGFEKGHEFETPLVEFFYKNDDLNDPLITDDHVKLLNIANDEEIAKLKKMALEINKALVEMLDSINLRLVDFKIEFGRTEDGDILLADEISPDTCRIWEKDSDTNFDKDVYREDRGSIIDTYQTFLNKLEALK</sequence>
<evidence type="ECO:0000255" key="1">
    <source>
        <dbReference type="HAMAP-Rule" id="MF_00137"/>
    </source>
</evidence>
<feature type="chain" id="PRO_1000122930" description="Phosphoribosylaminoimidazole-succinocarboxamide synthase">
    <location>
        <begin position="1"/>
        <end position="234"/>
    </location>
</feature>
<reference key="1">
    <citation type="journal article" date="2009" name="Appl. Environ. Microbiol.">
        <title>Genome analysis of the meat starter culture bacterium Staphylococcus carnosus TM300.</title>
        <authorList>
            <person name="Rosenstein R."/>
            <person name="Nerz C."/>
            <person name="Biswas L."/>
            <person name="Resch A."/>
            <person name="Raddatz G."/>
            <person name="Schuster S.C."/>
            <person name="Goetz F."/>
        </authorList>
    </citation>
    <scope>NUCLEOTIDE SEQUENCE [LARGE SCALE GENOMIC DNA]</scope>
    <source>
        <strain>TM300</strain>
    </source>
</reference>
<gene>
    <name evidence="1" type="primary">purC</name>
    <name type="ordered locus">Sca_0688</name>
</gene>
<protein>
    <recommendedName>
        <fullName evidence="1">Phosphoribosylaminoimidazole-succinocarboxamide synthase</fullName>
        <ecNumber evidence="1">6.3.2.6</ecNumber>
    </recommendedName>
    <alternativeName>
        <fullName evidence="1">SAICAR synthetase</fullName>
    </alternativeName>
</protein>
<proteinExistence type="inferred from homology"/>
<accession>B9DQ35</accession>
<keyword id="KW-0067">ATP-binding</keyword>
<keyword id="KW-0436">Ligase</keyword>
<keyword id="KW-0547">Nucleotide-binding</keyword>
<keyword id="KW-0658">Purine biosynthesis</keyword>
<keyword id="KW-1185">Reference proteome</keyword>